<dbReference type="EC" id="3.1.13.1" evidence="2"/>
<dbReference type="EMBL" id="AM933172">
    <property type="protein sequence ID" value="CAR32908.1"/>
    <property type="molecule type" value="Genomic_DNA"/>
</dbReference>
<dbReference type="RefSeq" id="WP_000485048.1">
    <property type="nucleotide sequence ID" value="NC_011294.1"/>
</dbReference>
<dbReference type="SMR" id="B5R490"/>
<dbReference type="KEGG" id="set:SEN1330"/>
<dbReference type="HOGENOM" id="CLU_002333_7_3_6"/>
<dbReference type="Proteomes" id="UP000000613">
    <property type="component" value="Chromosome"/>
</dbReference>
<dbReference type="GO" id="GO:0005829">
    <property type="term" value="C:cytosol"/>
    <property type="evidence" value="ECO:0007669"/>
    <property type="project" value="TreeGrafter"/>
</dbReference>
<dbReference type="GO" id="GO:0008859">
    <property type="term" value="F:exoribonuclease II activity"/>
    <property type="evidence" value="ECO:0007669"/>
    <property type="project" value="UniProtKB-UniRule"/>
</dbReference>
<dbReference type="GO" id="GO:0003723">
    <property type="term" value="F:RNA binding"/>
    <property type="evidence" value="ECO:0007669"/>
    <property type="project" value="UniProtKB-KW"/>
</dbReference>
<dbReference type="GO" id="GO:0006402">
    <property type="term" value="P:mRNA catabolic process"/>
    <property type="evidence" value="ECO:0007669"/>
    <property type="project" value="UniProtKB-UniRule"/>
</dbReference>
<dbReference type="FunFam" id="2.40.50.140:FF:000079">
    <property type="entry name" value="Exoribonuclease 2"/>
    <property type="match status" value="1"/>
</dbReference>
<dbReference type="FunFam" id="2.40.50.140:FF:000081">
    <property type="entry name" value="Exoribonuclease 2"/>
    <property type="match status" value="1"/>
</dbReference>
<dbReference type="FunFam" id="2.40.50.640:FF:000001">
    <property type="entry name" value="Exoribonuclease 2"/>
    <property type="match status" value="1"/>
</dbReference>
<dbReference type="Gene3D" id="2.40.50.640">
    <property type="match status" value="1"/>
</dbReference>
<dbReference type="Gene3D" id="2.40.50.140">
    <property type="entry name" value="Nucleic acid-binding proteins"/>
    <property type="match status" value="2"/>
</dbReference>
<dbReference type="HAMAP" id="MF_01036">
    <property type="entry name" value="RNase_II"/>
    <property type="match status" value="1"/>
</dbReference>
<dbReference type="InterPro" id="IPR011129">
    <property type="entry name" value="CSD"/>
</dbReference>
<dbReference type="InterPro" id="IPR012340">
    <property type="entry name" value="NA-bd_OB-fold"/>
</dbReference>
<dbReference type="InterPro" id="IPR013223">
    <property type="entry name" value="RNase_B_OB_dom"/>
</dbReference>
<dbReference type="InterPro" id="IPR011804">
    <property type="entry name" value="RNase_II"/>
</dbReference>
<dbReference type="InterPro" id="IPR001900">
    <property type="entry name" value="RNase_II/R"/>
</dbReference>
<dbReference type="InterPro" id="IPR022966">
    <property type="entry name" value="RNase_II/R_CS"/>
</dbReference>
<dbReference type="InterPro" id="IPR004476">
    <property type="entry name" value="RNase_II/RNase_R"/>
</dbReference>
<dbReference type="InterPro" id="IPR050180">
    <property type="entry name" value="RNR_Ribonuclease"/>
</dbReference>
<dbReference type="InterPro" id="IPR003029">
    <property type="entry name" value="S1_domain"/>
</dbReference>
<dbReference type="NCBIfam" id="TIGR00358">
    <property type="entry name" value="3_prime_RNase"/>
    <property type="match status" value="1"/>
</dbReference>
<dbReference type="NCBIfam" id="NF003455">
    <property type="entry name" value="PRK05054.1"/>
    <property type="match status" value="1"/>
</dbReference>
<dbReference type="NCBIfam" id="TIGR02062">
    <property type="entry name" value="RNase_B"/>
    <property type="match status" value="1"/>
</dbReference>
<dbReference type="PANTHER" id="PTHR23355:SF37">
    <property type="entry name" value="EXORIBONUCLEASE 2"/>
    <property type="match status" value="1"/>
</dbReference>
<dbReference type="PANTHER" id="PTHR23355">
    <property type="entry name" value="RIBONUCLEASE"/>
    <property type="match status" value="1"/>
</dbReference>
<dbReference type="Pfam" id="PF08206">
    <property type="entry name" value="OB_RNB"/>
    <property type="match status" value="1"/>
</dbReference>
<dbReference type="Pfam" id="PF00773">
    <property type="entry name" value="RNB"/>
    <property type="match status" value="1"/>
</dbReference>
<dbReference type="Pfam" id="PF00575">
    <property type="entry name" value="S1"/>
    <property type="match status" value="1"/>
</dbReference>
<dbReference type="SMART" id="SM00357">
    <property type="entry name" value="CSP"/>
    <property type="match status" value="1"/>
</dbReference>
<dbReference type="SMART" id="SM00955">
    <property type="entry name" value="RNB"/>
    <property type="match status" value="1"/>
</dbReference>
<dbReference type="SUPFAM" id="SSF50249">
    <property type="entry name" value="Nucleic acid-binding proteins"/>
    <property type="match status" value="4"/>
</dbReference>
<dbReference type="PROSITE" id="PS01175">
    <property type="entry name" value="RIBONUCLEASE_II"/>
    <property type="match status" value="1"/>
</dbReference>
<reference key="1">
    <citation type="journal article" date="2008" name="Genome Res.">
        <title>Comparative genome analysis of Salmonella enteritidis PT4 and Salmonella gallinarum 287/91 provides insights into evolutionary and host adaptation pathways.</title>
        <authorList>
            <person name="Thomson N.R."/>
            <person name="Clayton D.J."/>
            <person name="Windhorst D."/>
            <person name="Vernikos G."/>
            <person name="Davidson S."/>
            <person name="Churcher C."/>
            <person name="Quail M.A."/>
            <person name="Stevens M."/>
            <person name="Jones M.A."/>
            <person name="Watson M."/>
            <person name="Barron A."/>
            <person name="Layton A."/>
            <person name="Pickard D."/>
            <person name="Kingsley R.A."/>
            <person name="Bignell A."/>
            <person name="Clark L."/>
            <person name="Harris B."/>
            <person name="Ormond D."/>
            <person name="Abdellah Z."/>
            <person name="Brooks K."/>
            <person name="Cherevach I."/>
            <person name="Chillingworth T."/>
            <person name="Woodward J."/>
            <person name="Norberczak H."/>
            <person name="Lord A."/>
            <person name="Arrowsmith C."/>
            <person name="Jagels K."/>
            <person name="Moule S."/>
            <person name="Mungall K."/>
            <person name="Saunders M."/>
            <person name="Whitehead S."/>
            <person name="Chabalgoity J.A."/>
            <person name="Maskell D."/>
            <person name="Humphreys T."/>
            <person name="Roberts M."/>
            <person name="Barrow P.A."/>
            <person name="Dougan G."/>
            <person name="Parkhill J."/>
        </authorList>
    </citation>
    <scope>NUCLEOTIDE SEQUENCE [LARGE SCALE GENOMIC DNA]</scope>
    <source>
        <strain>P125109</strain>
    </source>
</reference>
<protein>
    <recommendedName>
        <fullName evidence="2">Exoribonuclease 2</fullName>
        <ecNumber evidence="2">3.1.13.1</ecNumber>
    </recommendedName>
    <alternativeName>
        <fullName evidence="2">Exoribonuclease II</fullName>
        <shortName evidence="2">RNase II</shortName>
        <shortName evidence="2">Ribonuclease II</shortName>
    </alternativeName>
</protein>
<gene>
    <name evidence="2" type="primary">rnb</name>
    <name type="ordered locus">SEN1330</name>
</gene>
<feature type="chain" id="PRO_1000135875" description="Exoribonuclease 2">
    <location>
        <begin position="1"/>
        <end position="644"/>
    </location>
</feature>
<feature type="domain" description="RNB" evidence="1">
    <location>
        <begin position="189"/>
        <end position="516"/>
    </location>
</feature>
<feature type="domain" description="S1 motif" evidence="2">
    <location>
        <begin position="561"/>
        <end position="643"/>
    </location>
</feature>
<comment type="function">
    <text evidence="2">Involved in mRNA degradation. Hydrolyzes single-stranded polyribonucleotides processively in the 3' to 5' direction.</text>
</comment>
<comment type="catalytic activity">
    <reaction evidence="2">
        <text>Exonucleolytic cleavage in the 3'- to 5'-direction to yield nucleoside 5'-phosphates.</text>
        <dbReference type="EC" id="3.1.13.1"/>
    </reaction>
</comment>
<comment type="subcellular location">
    <subcellularLocation>
        <location evidence="2">Cytoplasm</location>
    </subcellularLocation>
</comment>
<comment type="similarity">
    <text evidence="2">Belongs to the RNR ribonuclease family. RNase II subfamily.</text>
</comment>
<evidence type="ECO:0000255" key="1"/>
<evidence type="ECO:0000255" key="2">
    <source>
        <dbReference type="HAMAP-Rule" id="MF_01036"/>
    </source>
</evidence>
<name>RNB_SALEP</name>
<sequence length="644" mass="72434">MFQDNPLLAQLKQQLHSQTPRAEGVVKATEKGFGFLEVDAQKSYFIPPPQMKKVMHGDRIVAVIHTEKERESAEPEELIEPFLTRFVGKVQGKNDRLSIVPDHPLLKDAIPCRAARGVQHEFKEGDWAVAEMRRHPLKGDRSFYADLTQYITFADDHFVPWWVTLARHNLEKEAPNGVATEMLDEGLERQDLTALNFVTIDSASTEDMDDALYAEELADGRLQLTVAIADPTAWIAEGSKLDNAAKIRAFTNYLPGFNIPMLPRELSDDLCSLRANEVRPALACRMIISADGTIDDDIAFFAATIESKAKLAYDNVSDWLENNGTWQPDNEGIAHQIRLLHRICLSRSEWRHHHALVFKDRPDYRFVLGEKGEVLDIVAEPRRIANRIVEESMIAANLCAARVLRDKLGFGIYNVHTGFDPANADALAALLKTHGLHVDAEEVLTLEGFCKLRRELDAQPSGFLDSRIRRFQSFAEISTEPGPHFGLGLEAYATWTSPIRKYGDMINHRLLKAVIKGEAIARPQEDITQQMAERRRLNRMAERDVGDWLYARFLNDKAGTNTRFAAEIIDVSRGGMRVRLVDNGAIAFIPAPFLHAVRDELVCSQENGTVQIKGETVYKVTDVIDVTIAEVRMETRSIIARPAA</sequence>
<accession>B5R490</accession>
<keyword id="KW-0963">Cytoplasm</keyword>
<keyword id="KW-0269">Exonuclease</keyword>
<keyword id="KW-0378">Hydrolase</keyword>
<keyword id="KW-0540">Nuclease</keyword>
<keyword id="KW-0694">RNA-binding</keyword>
<proteinExistence type="inferred from homology"/>
<organism>
    <name type="scientific">Salmonella enteritidis PT4 (strain P125109)</name>
    <dbReference type="NCBI Taxonomy" id="550537"/>
    <lineage>
        <taxon>Bacteria</taxon>
        <taxon>Pseudomonadati</taxon>
        <taxon>Pseudomonadota</taxon>
        <taxon>Gammaproteobacteria</taxon>
        <taxon>Enterobacterales</taxon>
        <taxon>Enterobacteriaceae</taxon>
        <taxon>Salmonella</taxon>
    </lineage>
</organism>